<protein>
    <recommendedName>
        <fullName evidence="1">1-deoxy-D-xylulose 5-phosphate reductoisomerase</fullName>
        <shortName evidence="1">DXP reductoisomerase</shortName>
        <ecNumber evidence="1">1.1.1.267</ecNumber>
    </recommendedName>
    <alternativeName>
        <fullName evidence="1">1-deoxyxylulose-5-phosphate reductoisomerase</fullName>
    </alternativeName>
    <alternativeName>
        <fullName evidence="1">2-C-methyl-D-erythritol 4-phosphate synthase</fullName>
    </alternativeName>
</protein>
<comment type="function">
    <text evidence="1">Catalyzes the NADPH-dependent rearrangement and reduction of 1-deoxy-D-xylulose-5-phosphate (DXP) to 2-C-methyl-D-erythritol 4-phosphate (MEP).</text>
</comment>
<comment type="catalytic activity">
    <reaction evidence="1">
        <text>2-C-methyl-D-erythritol 4-phosphate + NADP(+) = 1-deoxy-D-xylulose 5-phosphate + NADPH + H(+)</text>
        <dbReference type="Rhea" id="RHEA:13717"/>
        <dbReference type="ChEBI" id="CHEBI:15378"/>
        <dbReference type="ChEBI" id="CHEBI:57783"/>
        <dbReference type="ChEBI" id="CHEBI:57792"/>
        <dbReference type="ChEBI" id="CHEBI:58262"/>
        <dbReference type="ChEBI" id="CHEBI:58349"/>
        <dbReference type="EC" id="1.1.1.267"/>
    </reaction>
    <physiologicalReaction direction="right-to-left" evidence="1">
        <dbReference type="Rhea" id="RHEA:13719"/>
    </physiologicalReaction>
</comment>
<comment type="cofactor">
    <cofactor evidence="1">
        <name>Mg(2+)</name>
        <dbReference type="ChEBI" id="CHEBI:18420"/>
    </cofactor>
    <cofactor evidence="1">
        <name>Mn(2+)</name>
        <dbReference type="ChEBI" id="CHEBI:29035"/>
    </cofactor>
</comment>
<comment type="pathway">
    <text evidence="1">Isoprenoid biosynthesis; isopentenyl diphosphate biosynthesis via DXP pathway; isopentenyl diphosphate from 1-deoxy-D-xylulose 5-phosphate: step 1/6.</text>
</comment>
<comment type="similarity">
    <text evidence="1">Belongs to the DXR family.</text>
</comment>
<gene>
    <name evidence="1" type="primary">dxr</name>
    <name type="ordered locus">RPD_2851</name>
</gene>
<feature type="chain" id="PRO_1000020302" description="1-deoxy-D-xylulose 5-phosphate reductoisomerase">
    <location>
        <begin position="1"/>
        <end position="407"/>
    </location>
</feature>
<feature type="binding site" evidence="1">
    <location>
        <position position="25"/>
    </location>
    <ligand>
        <name>NADPH</name>
        <dbReference type="ChEBI" id="CHEBI:57783"/>
    </ligand>
</feature>
<feature type="binding site" evidence="1">
    <location>
        <position position="26"/>
    </location>
    <ligand>
        <name>NADPH</name>
        <dbReference type="ChEBI" id="CHEBI:57783"/>
    </ligand>
</feature>
<feature type="binding site" evidence="1">
    <location>
        <position position="27"/>
    </location>
    <ligand>
        <name>NADPH</name>
        <dbReference type="ChEBI" id="CHEBI:57783"/>
    </ligand>
</feature>
<feature type="binding site" evidence="1">
    <location>
        <position position="28"/>
    </location>
    <ligand>
        <name>NADPH</name>
        <dbReference type="ChEBI" id="CHEBI:57783"/>
    </ligand>
</feature>
<feature type="binding site" evidence="1">
    <location>
        <position position="53"/>
    </location>
    <ligand>
        <name>NADPH</name>
        <dbReference type="ChEBI" id="CHEBI:57783"/>
    </ligand>
</feature>
<feature type="binding site" evidence="1">
    <location>
        <position position="136"/>
    </location>
    <ligand>
        <name>NADPH</name>
        <dbReference type="ChEBI" id="CHEBI:57783"/>
    </ligand>
</feature>
<feature type="binding site" evidence="1">
    <location>
        <position position="137"/>
    </location>
    <ligand>
        <name>1-deoxy-D-xylulose 5-phosphate</name>
        <dbReference type="ChEBI" id="CHEBI:57792"/>
    </ligand>
</feature>
<feature type="binding site" evidence="1">
    <location>
        <position position="138"/>
    </location>
    <ligand>
        <name>NADPH</name>
        <dbReference type="ChEBI" id="CHEBI:57783"/>
    </ligand>
</feature>
<feature type="binding site" evidence="1">
    <location>
        <position position="162"/>
    </location>
    <ligand>
        <name>Mn(2+)</name>
        <dbReference type="ChEBI" id="CHEBI:29035"/>
    </ligand>
</feature>
<feature type="binding site" evidence="1">
    <location>
        <position position="163"/>
    </location>
    <ligand>
        <name>1-deoxy-D-xylulose 5-phosphate</name>
        <dbReference type="ChEBI" id="CHEBI:57792"/>
    </ligand>
</feature>
<feature type="binding site" evidence="1">
    <location>
        <position position="164"/>
    </location>
    <ligand>
        <name>1-deoxy-D-xylulose 5-phosphate</name>
        <dbReference type="ChEBI" id="CHEBI:57792"/>
    </ligand>
</feature>
<feature type="binding site" evidence="1">
    <location>
        <position position="164"/>
    </location>
    <ligand>
        <name>Mn(2+)</name>
        <dbReference type="ChEBI" id="CHEBI:29035"/>
    </ligand>
</feature>
<feature type="binding site" evidence="1">
    <location>
        <position position="188"/>
    </location>
    <ligand>
        <name>1-deoxy-D-xylulose 5-phosphate</name>
        <dbReference type="ChEBI" id="CHEBI:57792"/>
    </ligand>
</feature>
<feature type="binding site" evidence="1">
    <location>
        <position position="211"/>
    </location>
    <ligand>
        <name>1-deoxy-D-xylulose 5-phosphate</name>
        <dbReference type="ChEBI" id="CHEBI:57792"/>
    </ligand>
</feature>
<feature type="binding site" evidence="1">
    <location>
        <position position="217"/>
    </location>
    <ligand>
        <name>NADPH</name>
        <dbReference type="ChEBI" id="CHEBI:57783"/>
    </ligand>
</feature>
<feature type="binding site" evidence="1">
    <location>
        <position position="224"/>
    </location>
    <ligand>
        <name>1-deoxy-D-xylulose 5-phosphate</name>
        <dbReference type="ChEBI" id="CHEBI:57792"/>
    </ligand>
</feature>
<feature type="binding site" evidence="1">
    <location>
        <position position="229"/>
    </location>
    <ligand>
        <name>1-deoxy-D-xylulose 5-phosphate</name>
        <dbReference type="ChEBI" id="CHEBI:57792"/>
    </ligand>
</feature>
<feature type="binding site" evidence="1">
    <location>
        <position position="230"/>
    </location>
    <ligand>
        <name>1-deoxy-D-xylulose 5-phosphate</name>
        <dbReference type="ChEBI" id="CHEBI:57792"/>
    </ligand>
</feature>
<feature type="binding site" evidence="1">
    <location>
        <position position="233"/>
    </location>
    <ligand>
        <name>1-deoxy-D-xylulose 5-phosphate</name>
        <dbReference type="ChEBI" id="CHEBI:57792"/>
    </ligand>
</feature>
<feature type="binding site" evidence="1">
    <location>
        <position position="233"/>
    </location>
    <ligand>
        <name>Mn(2+)</name>
        <dbReference type="ChEBI" id="CHEBI:29035"/>
    </ligand>
</feature>
<accession>Q136B0</accession>
<dbReference type="EC" id="1.1.1.267" evidence="1"/>
<dbReference type="EMBL" id="CP000283">
    <property type="protein sequence ID" value="ABE40079.1"/>
    <property type="molecule type" value="Genomic_DNA"/>
</dbReference>
<dbReference type="SMR" id="Q136B0"/>
<dbReference type="STRING" id="316057.RPD_2851"/>
<dbReference type="KEGG" id="rpd:RPD_2851"/>
<dbReference type="eggNOG" id="COG0743">
    <property type="taxonomic scope" value="Bacteria"/>
</dbReference>
<dbReference type="HOGENOM" id="CLU_035714_0_1_5"/>
<dbReference type="BioCyc" id="RPAL316057:RPD_RS14325-MONOMER"/>
<dbReference type="UniPathway" id="UPA00056">
    <property type="reaction ID" value="UER00092"/>
</dbReference>
<dbReference type="Proteomes" id="UP000001818">
    <property type="component" value="Chromosome"/>
</dbReference>
<dbReference type="GO" id="GO:0030604">
    <property type="term" value="F:1-deoxy-D-xylulose-5-phosphate reductoisomerase activity"/>
    <property type="evidence" value="ECO:0007669"/>
    <property type="project" value="UniProtKB-UniRule"/>
</dbReference>
<dbReference type="GO" id="GO:0030145">
    <property type="term" value="F:manganese ion binding"/>
    <property type="evidence" value="ECO:0007669"/>
    <property type="project" value="TreeGrafter"/>
</dbReference>
<dbReference type="GO" id="GO:0070402">
    <property type="term" value="F:NADPH binding"/>
    <property type="evidence" value="ECO:0007669"/>
    <property type="project" value="InterPro"/>
</dbReference>
<dbReference type="GO" id="GO:0051484">
    <property type="term" value="P:isopentenyl diphosphate biosynthetic process, methylerythritol 4-phosphate pathway involved in terpenoid biosynthetic process"/>
    <property type="evidence" value="ECO:0007669"/>
    <property type="project" value="TreeGrafter"/>
</dbReference>
<dbReference type="FunFam" id="3.40.50.720:FF:000045">
    <property type="entry name" value="1-deoxy-D-xylulose 5-phosphate reductoisomerase"/>
    <property type="match status" value="1"/>
</dbReference>
<dbReference type="Gene3D" id="1.10.1740.10">
    <property type="match status" value="1"/>
</dbReference>
<dbReference type="Gene3D" id="3.40.50.720">
    <property type="entry name" value="NAD(P)-binding Rossmann-like Domain"/>
    <property type="match status" value="1"/>
</dbReference>
<dbReference type="HAMAP" id="MF_00183">
    <property type="entry name" value="DXP_reductoisom"/>
    <property type="match status" value="1"/>
</dbReference>
<dbReference type="InterPro" id="IPR003821">
    <property type="entry name" value="DXP_reductoisomerase"/>
</dbReference>
<dbReference type="InterPro" id="IPR013644">
    <property type="entry name" value="DXP_reductoisomerase_C"/>
</dbReference>
<dbReference type="InterPro" id="IPR013512">
    <property type="entry name" value="DXP_reductoisomerase_N"/>
</dbReference>
<dbReference type="InterPro" id="IPR026877">
    <property type="entry name" value="DXPR_C"/>
</dbReference>
<dbReference type="InterPro" id="IPR036169">
    <property type="entry name" value="DXPR_C_sf"/>
</dbReference>
<dbReference type="InterPro" id="IPR036291">
    <property type="entry name" value="NAD(P)-bd_dom_sf"/>
</dbReference>
<dbReference type="NCBIfam" id="TIGR00243">
    <property type="entry name" value="Dxr"/>
    <property type="match status" value="1"/>
</dbReference>
<dbReference type="PANTHER" id="PTHR30525">
    <property type="entry name" value="1-DEOXY-D-XYLULOSE 5-PHOSPHATE REDUCTOISOMERASE"/>
    <property type="match status" value="1"/>
</dbReference>
<dbReference type="PANTHER" id="PTHR30525:SF0">
    <property type="entry name" value="1-DEOXY-D-XYLULOSE 5-PHOSPHATE REDUCTOISOMERASE, CHLOROPLASTIC"/>
    <property type="match status" value="1"/>
</dbReference>
<dbReference type="Pfam" id="PF08436">
    <property type="entry name" value="DXP_redisom_C"/>
    <property type="match status" value="1"/>
</dbReference>
<dbReference type="Pfam" id="PF02670">
    <property type="entry name" value="DXP_reductoisom"/>
    <property type="match status" value="1"/>
</dbReference>
<dbReference type="Pfam" id="PF13288">
    <property type="entry name" value="DXPR_C"/>
    <property type="match status" value="1"/>
</dbReference>
<dbReference type="PIRSF" id="PIRSF006205">
    <property type="entry name" value="Dxp_reductismrs"/>
    <property type="match status" value="1"/>
</dbReference>
<dbReference type="SUPFAM" id="SSF69055">
    <property type="entry name" value="1-deoxy-D-xylulose-5-phosphate reductoisomerase, C-terminal domain"/>
    <property type="match status" value="1"/>
</dbReference>
<dbReference type="SUPFAM" id="SSF55347">
    <property type="entry name" value="Glyceraldehyde-3-phosphate dehydrogenase-like, C-terminal domain"/>
    <property type="match status" value="1"/>
</dbReference>
<dbReference type="SUPFAM" id="SSF51735">
    <property type="entry name" value="NAD(P)-binding Rossmann-fold domains"/>
    <property type="match status" value="1"/>
</dbReference>
<sequence>MSAVPLKNDGAAHAGVRTISVLGATGSIGDSTMDLLRAAPEKYRVESLTGNANVAGLAKLAKEFSAKFVAVADPARLGELRAALADTEIACGAGESAVIEAASRPADWVMAAISGAAGLKPALAAVDRGATVALANKECLVCAGDFFMSRAVAAGARILPADSEHNALFQALASGNRHELTRVIITASGGPFRTWAAADIEQATLAQALKHPNWSMGQKITIDSASMMNKGLEVIEASYLFALSPDEIDVLVHPQSIVHGLVEFADHSVVAQLGAPDMRIPIAHCLGWPDRIAGRAARLDLAKIGQLTFEAPDFVRFPGLRLAYDALRTGNGATTVYNAANEIAVAAFIAQKIRFGAIARLVEDTLNGWVRAGNLAPLSSADDAIAVDHNARKMAATLLPQIAAKAS</sequence>
<reference key="1">
    <citation type="submission" date="2006-03" db="EMBL/GenBank/DDBJ databases">
        <title>Complete sequence of Rhodopseudomonas palustris BisB5.</title>
        <authorList>
            <consortium name="US DOE Joint Genome Institute"/>
            <person name="Copeland A."/>
            <person name="Lucas S."/>
            <person name="Lapidus A."/>
            <person name="Barry K."/>
            <person name="Detter J.C."/>
            <person name="Glavina del Rio T."/>
            <person name="Hammon N."/>
            <person name="Israni S."/>
            <person name="Dalin E."/>
            <person name="Tice H."/>
            <person name="Pitluck S."/>
            <person name="Chain P."/>
            <person name="Malfatti S."/>
            <person name="Shin M."/>
            <person name="Vergez L."/>
            <person name="Schmutz J."/>
            <person name="Larimer F."/>
            <person name="Land M."/>
            <person name="Hauser L."/>
            <person name="Pelletier D.A."/>
            <person name="Kyrpides N."/>
            <person name="Lykidis A."/>
            <person name="Oda Y."/>
            <person name="Harwood C.S."/>
            <person name="Richardson P."/>
        </authorList>
    </citation>
    <scope>NUCLEOTIDE SEQUENCE [LARGE SCALE GENOMIC DNA]</scope>
    <source>
        <strain>BisB5</strain>
    </source>
</reference>
<evidence type="ECO:0000255" key="1">
    <source>
        <dbReference type="HAMAP-Rule" id="MF_00183"/>
    </source>
</evidence>
<name>DXR_RHOPS</name>
<organism>
    <name type="scientific">Rhodopseudomonas palustris (strain BisB5)</name>
    <dbReference type="NCBI Taxonomy" id="316057"/>
    <lineage>
        <taxon>Bacteria</taxon>
        <taxon>Pseudomonadati</taxon>
        <taxon>Pseudomonadota</taxon>
        <taxon>Alphaproteobacteria</taxon>
        <taxon>Hyphomicrobiales</taxon>
        <taxon>Nitrobacteraceae</taxon>
        <taxon>Rhodopseudomonas</taxon>
    </lineage>
</organism>
<keyword id="KW-0414">Isoprene biosynthesis</keyword>
<keyword id="KW-0464">Manganese</keyword>
<keyword id="KW-0479">Metal-binding</keyword>
<keyword id="KW-0521">NADP</keyword>
<keyword id="KW-0560">Oxidoreductase</keyword>
<proteinExistence type="inferred from homology"/>